<keyword id="KW-0067">ATP-binding</keyword>
<keyword id="KW-0436">Ligase</keyword>
<keyword id="KW-0547">Nucleotide-binding</keyword>
<keyword id="KW-0554">One-carbon metabolism</keyword>
<keyword id="KW-1185">Reference proteome</keyword>
<feature type="chain" id="PRO_0000199362" description="Formate--tetrahydrofolate ligase">
    <location>
        <begin position="1"/>
        <end position="530"/>
    </location>
</feature>
<feature type="binding site" evidence="1">
    <location>
        <begin position="46"/>
        <end position="53"/>
    </location>
    <ligand>
        <name>ATP</name>
        <dbReference type="ChEBI" id="CHEBI:30616"/>
    </ligand>
</feature>
<reference key="1">
    <citation type="journal article" date="2002" name="Nucleic Acids Res.">
        <title>The complete genomic sequence of Mycoplasma penetrans, an intracellular bacterial pathogen in humans.</title>
        <authorList>
            <person name="Sasaki Y."/>
            <person name="Ishikawa J."/>
            <person name="Yamashita A."/>
            <person name="Oshima K."/>
            <person name="Kenri T."/>
            <person name="Furuya K."/>
            <person name="Yoshino C."/>
            <person name="Horino A."/>
            <person name="Shiba T."/>
            <person name="Sasaki T."/>
            <person name="Hattori M."/>
        </authorList>
    </citation>
    <scope>NUCLEOTIDE SEQUENCE [LARGE SCALE GENOMIC DNA]</scope>
    <source>
        <strain>HF-2</strain>
    </source>
</reference>
<sequence length="530" mass="59817">MTNNIFKYFNIKELEKFGKFYKVKKEYEIPKKLESKLILVTSINPTPEGEGKTTTLIGINDCLNYFGKESIACLRQPSMGPYFGIKGGATGSGKCEIQNPEKVNCGFTNDFYAIEAANNLIMSVIENEIYFNTDLEIDPQKIIWKRCIDINDRSLRDINYQVSKNTKINSSFSITAASNLMALFCLAKSKSDFKKRIENTLVAFSKSNKAIYVKDLNIIDSIMLILDDALKPNLVFSQDNNPIIMHGGPFANIAHGCNSVIALSCGLNKAEYVLTEAGFGSELGAEKFINILCRETNLVPNLVVLTITLKAIKYHGVNNSNNTSPLTDEKEKIDIGFNNVIHHFNLLKNLNLNVCIVINKFSDDNKNELDYLFNKSSELTKTVISTMWQDGASKNKSLFETIIESVQEPKPINWTYDLKDNAVNKINDLSTKVYNGATITYSDLATAKLKDNENWIQDYYVCGAKTPYSPSIKNEYMDTNKHDIHVEDIEINHAVKFIIPIFSKTFLMPGLPKVPNAKKIKINFDKFKYE</sequence>
<dbReference type="EC" id="6.3.4.3" evidence="1"/>
<dbReference type="EMBL" id="BA000026">
    <property type="protein sequence ID" value="BAC44661.1"/>
    <property type="molecule type" value="Genomic_DNA"/>
</dbReference>
<dbReference type="RefSeq" id="WP_011077690.1">
    <property type="nucleotide sequence ID" value="NC_004432.1"/>
</dbReference>
<dbReference type="SMR" id="Q8EUQ1"/>
<dbReference type="STRING" id="272633.gene:10731992"/>
<dbReference type="KEGG" id="mpe:MYPE8690"/>
<dbReference type="eggNOG" id="COG2759">
    <property type="taxonomic scope" value="Bacteria"/>
</dbReference>
<dbReference type="HOGENOM" id="CLU_003601_3_3_14"/>
<dbReference type="InParanoid" id="Q8EUQ1"/>
<dbReference type="UniPathway" id="UPA00193"/>
<dbReference type="Proteomes" id="UP000002522">
    <property type="component" value="Chromosome"/>
</dbReference>
<dbReference type="GO" id="GO:0005524">
    <property type="term" value="F:ATP binding"/>
    <property type="evidence" value="ECO:0007669"/>
    <property type="project" value="UniProtKB-UniRule"/>
</dbReference>
<dbReference type="GO" id="GO:0004329">
    <property type="term" value="F:formate-tetrahydrofolate ligase activity"/>
    <property type="evidence" value="ECO:0007669"/>
    <property type="project" value="UniProtKB-UniRule"/>
</dbReference>
<dbReference type="GO" id="GO:0035999">
    <property type="term" value="P:tetrahydrofolate interconversion"/>
    <property type="evidence" value="ECO:0007669"/>
    <property type="project" value="UniProtKB-UniRule"/>
</dbReference>
<dbReference type="Gene3D" id="3.30.1510.10">
    <property type="entry name" value="Domain 2, N(10)-formyltetrahydrofolate synthetase"/>
    <property type="match status" value="1"/>
</dbReference>
<dbReference type="Gene3D" id="3.10.410.10">
    <property type="entry name" value="Formyltetrahydrofolate synthetase, domain 3"/>
    <property type="match status" value="1"/>
</dbReference>
<dbReference type="Gene3D" id="3.40.50.300">
    <property type="entry name" value="P-loop containing nucleotide triphosphate hydrolases"/>
    <property type="match status" value="1"/>
</dbReference>
<dbReference type="HAMAP" id="MF_01543">
    <property type="entry name" value="FTHFS"/>
    <property type="match status" value="1"/>
</dbReference>
<dbReference type="InterPro" id="IPR000559">
    <property type="entry name" value="Formate_THF_ligase"/>
</dbReference>
<dbReference type="InterPro" id="IPR020628">
    <property type="entry name" value="Formate_THF_ligase_CS"/>
</dbReference>
<dbReference type="InterPro" id="IPR027417">
    <property type="entry name" value="P-loop_NTPase"/>
</dbReference>
<dbReference type="Pfam" id="PF01268">
    <property type="entry name" value="FTHFS"/>
    <property type="match status" value="1"/>
</dbReference>
<dbReference type="SUPFAM" id="SSF52540">
    <property type="entry name" value="P-loop containing nucleoside triphosphate hydrolases"/>
    <property type="match status" value="1"/>
</dbReference>
<dbReference type="PROSITE" id="PS00721">
    <property type="entry name" value="FTHFS_1"/>
    <property type="match status" value="1"/>
</dbReference>
<evidence type="ECO:0000255" key="1">
    <source>
        <dbReference type="HAMAP-Rule" id="MF_01543"/>
    </source>
</evidence>
<name>FTHS_MALP2</name>
<accession>Q8EUQ1</accession>
<comment type="catalytic activity">
    <reaction evidence="1">
        <text>(6S)-5,6,7,8-tetrahydrofolate + formate + ATP = (6R)-10-formyltetrahydrofolate + ADP + phosphate</text>
        <dbReference type="Rhea" id="RHEA:20221"/>
        <dbReference type="ChEBI" id="CHEBI:15740"/>
        <dbReference type="ChEBI" id="CHEBI:30616"/>
        <dbReference type="ChEBI" id="CHEBI:43474"/>
        <dbReference type="ChEBI" id="CHEBI:57453"/>
        <dbReference type="ChEBI" id="CHEBI:195366"/>
        <dbReference type="ChEBI" id="CHEBI:456216"/>
        <dbReference type="EC" id="6.3.4.3"/>
    </reaction>
</comment>
<comment type="pathway">
    <text evidence="1">One-carbon metabolism; tetrahydrofolate interconversion.</text>
</comment>
<comment type="similarity">
    <text evidence="1">Belongs to the formate--tetrahydrofolate ligase family.</text>
</comment>
<proteinExistence type="inferred from homology"/>
<protein>
    <recommendedName>
        <fullName evidence="1">Formate--tetrahydrofolate ligase</fullName>
        <ecNumber evidence="1">6.3.4.3</ecNumber>
    </recommendedName>
    <alternativeName>
        <fullName evidence="1">Formyltetrahydrofolate synthetase</fullName>
        <shortName evidence="1">FHS</shortName>
        <shortName evidence="1">FTHFS</shortName>
    </alternativeName>
</protein>
<gene>
    <name evidence="1" type="primary">fhs</name>
    <name type="ordered locus">MYPE8690</name>
</gene>
<organism>
    <name type="scientific">Malacoplasma penetrans (strain HF-2)</name>
    <name type="common">Mycoplasma penetrans</name>
    <dbReference type="NCBI Taxonomy" id="272633"/>
    <lineage>
        <taxon>Bacteria</taxon>
        <taxon>Bacillati</taxon>
        <taxon>Mycoplasmatota</taxon>
        <taxon>Mycoplasmoidales</taxon>
        <taxon>Mycoplasmoidaceae</taxon>
        <taxon>Malacoplasma</taxon>
    </lineage>
</organism>